<gene>
    <name type="primary">THAP6</name>
</gene>
<comment type="interaction">
    <interactant intactId="EBI-3925505">
        <id>Q8TBB0</id>
    </interactant>
    <interactant intactId="EBI-10173507">
        <id>Q6UY14-3</id>
        <label>ADAMTSL4</label>
    </interactant>
    <organismsDiffer>false</organismsDiffer>
    <experiments>3</experiments>
</comment>
<comment type="interaction">
    <interactant intactId="EBI-3925505">
        <id>Q8TBB0</id>
    </interactant>
    <interactant intactId="EBI-541426">
        <id>Q9BXS5</id>
        <label>AP1M1</label>
    </interactant>
    <organismsDiffer>false</organismsDiffer>
    <experiments>3</experiments>
</comment>
<comment type="interaction">
    <interactant intactId="EBI-3925505">
        <id>Q8TBB0</id>
    </interactant>
    <interactant intactId="EBI-12011224">
        <id>Q9NPB3</id>
        <label>CABP2</label>
    </interactant>
    <organismsDiffer>false</organismsDiffer>
    <experiments>3</experiments>
</comment>
<comment type="interaction">
    <interactant intactId="EBI-3925505">
        <id>Q8TBB0</id>
    </interactant>
    <interactant intactId="EBI-7116203">
        <id>O75031</id>
        <label>HSF2BP</label>
    </interactant>
    <organismsDiffer>false</organismsDiffer>
    <experiments>3</experiments>
</comment>
<comment type="interaction">
    <interactant intactId="EBI-3925505">
        <id>Q8TBB0</id>
    </interactant>
    <interactant intactId="EBI-6509505">
        <id>Q0VD86</id>
        <label>INCA1</label>
    </interactant>
    <organismsDiffer>false</organismsDiffer>
    <experiments>3</experiments>
</comment>
<comment type="interaction">
    <interactant intactId="EBI-3925505">
        <id>Q8TBB0</id>
    </interactant>
    <interactant intactId="EBI-488533">
        <id>Q8WYH8</id>
        <label>ING5</label>
    </interactant>
    <organismsDiffer>false</organismsDiffer>
    <experiments>3</experiments>
</comment>
<comment type="interaction">
    <interactant intactId="EBI-3925505">
        <id>Q8TBB0</id>
    </interactant>
    <interactant intactId="EBI-2556193">
        <id>Q63ZY3</id>
        <label>KANK2</label>
    </interactant>
    <organismsDiffer>false</organismsDiffer>
    <experiments>3</experiments>
</comment>
<comment type="interaction">
    <interactant intactId="EBI-3925505">
        <id>Q8TBB0</id>
    </interactant>
    <interactant intactId="EBI-10172290">
        <id>P60409</id>
        <label>KRTAP10-7</label>
    </interactant>
    <organismsDiffer>false</organismsDiffer>
    <experiments>3</experiments>
</comment>
<comment type="interaction">
    <interactant intactId="EBI-3925505">
        <id>Q8TBB0</id>
    </interactant>
    <interactant intactId="EBI-11959475">
        <id>P25791-3</id>
        <label>LMO2</label>
    </interactant>
    <organismsDiffer>false</organismsDiffer>
    <experiments>3</experiments>
</comment>
<comment type="interaction">
    <interactant intactId="EBI-3925505">
        <id>Q8TBB0</id>
    </interactant>
    <interactant intactId="EBI-77889">
        <id>Q9UI95</id>
        <label>MAD2L2</label>
    </interactant>
    <organismsDiffer>false</organismsDiffer>
    <experiments>3</experiments>
</comment>
<comment type="interaction">
    <interactant intactId="EBI-3925505">
        <id>Q8TBB0</id>
    </interactant>
    <interactant intactId="EBI-741158">
        <id>Q96HA8</id>
        <label>NTAQ1</label>
    </interactant>
    <organismsDiffer>false</organismsDiffer>
    <experiments>3</experiments>
</comment>
<comment type="interaction">
    <interactant intactId="EBI-3925505">
        <id>Q8TBB0</id>
    </interactant>
    <interactant intactId="EBI-748974">
        <id>Q96CV9</id>
        <label>OPTN</label>
    </interactant>
    <organismsDiffer>false</organismsDiffer>
    <experiments>3</experiments>
</comment>
<comment type="interaction">
    <interactant intactId="EBI-3925505">
        <id>Q8TBB0</id>
    </interactant>
    <interactant intactId="EBI-79165">
        <id>Q9NRD5</id>
        <label>PICK1</label>
    </interactant>
    <organismsDiffer>false</organismsDiffer>
    <experiments>6</experiments>
</comment>
<comment type="interaction">
    <interactant intactId="EBI-3925505">
        <id>Q8TBB0</id>
    </interactant>
    <interactant intactId="EBI-372273">
        <id>P20618</id>
        <label>PSMB1</label>
    </interactant>
    <organismsDiffer>false</organismsDiffer>
    <experiments>3</experiments>
</comment>
<comment type="interaction">
    <interactant intactId="EBI-3925505">
        <id>Q8TBB0</id>
    </interactant>
    <interactant intactId="EBI-12076664">
        <id>O14787-2</id>
        <label>TNPO2</label>
    </interactant>
    <organismsDiffer>false</organismsDiffer>
    <experiments>3</experiments>
</comment>
<comment type="interaction">
    <interactant intactId="EBI-3925505">
        <id>Q8TBB0</id>
    </interactant>
    <interactant intactId="EBI-10183064">
        <id>Q8N5A5-2</id>
        <label>ZGPAT</label>
    </interactant>
    <organismsDiffer>false</organismsDiffer>
    <experiments>3</experiments>
</comment>
<comment type="interaction">
    <interactant intactId="EBI-3925505">
        <id>Q8TBB0</id>
    </interactant>
    <interactant intactId="EBI-625509">
        <id>Q8N720</id>
        <label>ZNF655</label>
    </interactant>
    <organismsDiffer>false</organismsDiffer>
    <experiments>3</experiments>
</comment>
<comment type="alternative products">
    <event type="alternative splicing"/>
    <isoform>
        <id>Q8TBB0-1</id>
        <name>1</name>
        <sequence type="displayed"/>
    </isoform>
    <isoform>
        <id>Q8TBB0-2</id>
        <name>2</name>
        <sequence type="described" ref="VSP_039072"/>
    </isoform>
    <isoform>
        <id>Q8TBB0-3</id>
        <name>3</name>
        <sequence type="described" ref="VSP_054378"/>
    </isoform>
</comment>
<evidence type="ECO:0000250" key="1"/>
<evidence type="ECO:0000255" key="2"/>
<evidence type="ECO:0000255" key="3">
    <source>
        <dbReference type="PROSITE-ProRule" id="PRU00309"/>
    </source>
</evidence>
<evidence type="ECO:0000303" key="4">
    <source>
    </source>
</evidence>
<evidence type="ECO:0000303" key="5">
    <source>
    </source>
</evidence>
<keyword id="KW-0025">Alternative splicing</keyword>
<keyword id="KW-0175">Coiled coil</keyword>
<keyword id="KW-0238">DNA-binding</keyword>
<keyword id="KW-0479">Metal-binding</keyword>
<keyword id="KW-1267">Proteomics identification</keyword>
<keyword id="KW-1185">Reference proteome</keyword>
<keyword id="KW-0862">Zinc</keyword>
<keyword id="KW-0863">Zinc-finger</keyword>
<protein>
    <recommendedName>
        <fullName>THAP domain-containing protein 6</fullName>
    </recommendedName>
</protein>
<sequence>MVKCCSAIGCASRCLPNSKLKGLTFHVFPTDENIKRKWVLAMKRLDVNAAGIWEPKKGDVLCSRHFKKTDFDRSAPNIKLKPGVIPSIFDSPYHLQGKREKLHCRKNFTLKTVPATNYNHHLVGASSCIEEFQSQFIFEHSYSVMDSPKKLKHKLDHVIGELEDTKESLRNVLDREKRFQKSLRKTIRELKDECLISQETANRLDTFCWDCCQESIEQDYIS</sequence>
<reference key="1">
    <citation type="journal article" date="2004" name="Nat. Genet.">
        <title>Complete sequencing and characterization of 21,243 full-length human cDNAs.</title>
        <authorList>
            <person name="Ota T."/>
            <person name="Suzuki Y."/>
            <person name="Nishikawa T."/>
            <person name="Otsuki T."/>
            <person name="Sugiyama T."/>
            <person name="Irie R."/>
            <person name="Wakamatsu A."/>
            <person name="Hayashi K."/>
            <person name="Sato H."/>
            <person name="Nagai K."/>
            <person name="Kimura K."/>
            <person name="Makita H."/>
            <person name="Sekine M."/>
            <person name="Obayashi M."/>
            <person name="Nishi T."/>
            <person name="Shibahara T."/>
            <person name="Tanaka T."/>
            <person name="Ishii S."/>
            <person name="Yamamoto J."/>
            <person name="Saito K."/>
            <person name="Kawai Y."/>
            <person name="Isono Y."/>
            <person name="Nakamura Y."/>
            <person name="Nagahari K."/>
            <person name="Murakami K."/>
            <person name="Yasuda T."/>
            <person name="Iwayanagi T."/>
            <person name="Wagatsuma M."/>
            <person name="Shiratori A."/>
            <person name="Sudo H."/>
            <person name="Hosoiri T."/>
            <person name="Kaku Y."/>
            <person name="Kodaira H."/>
            <person name="Kondo H."/>
            <person name="Sugawara M."/>
            <person name="Takahashi M."/>
            <person name="Kanda K."/>
            <person name="Yokoi T."/>
            <person name="Furuya T."/>
            <person name="Kikkawa E."/>
            <person name="Omura Y."/>
            <person name="Abe K."/>
            <person name="Kamihara K."/>
            <person name="Katsuta N."/>
            <person name="Sato K."/>
            <person name="Tanikawa M."/>
            <person name="Yamazaki M."/>
            <person name="Ninomiya K."/>
            <person name="Ishibashi T."/>
            <person name="Yamashita H."/>
            <person name="Murakawa K."/>
            <person name="Fujimori K."/>
            <person name="Tanai H."/>
            <person name="Kimata M."/>
            <person name="Watanabe M."/>
            <person name="Hiraoka S."/>
            <person name="Chiba Y."/>
            <person name="Ishida S."/>
            <person name="Ono Y."/>
            <person name="Takiguchi S."/>
            <person name="Watanabe S."/>
            <person name="Yosida M."/>
            <person name="Hotuta T."/>
            <person name="Kusano J."/>
            <person name="Kanehori K."/>
            <person name="Takahashi-Fujii A."/>
            <person name="Hara H."/>
            <person name="Tanase T.-O."/>
            <person name="Nomura Y."/>
            <person name="Togiya S."/>
            <person name="Komai F."/>
            <person name="Hara R."/>
            <person name="Takeuchi K."/>
            <person name="Arita M."/>
            <person name="Imose N."/>
            <person name="Musashino K."/>
            <person name="Yuuki H."/>
            <person name="Oshima A."/>
            <person name="Sasaki N."/>
            <person name="Aotsuka S."/>
            <person name="Yoshikawa Y."/>
            <person name="Matsunawa H."/>
            <person name="Ichihara T."/>
            <person name="Shiohata N."/>
            <person name="Sano S."/>
            <person name="Moriya S."/>
            <person name="Momiyama H."/>
            <person name="Satoh N."/>
            <person name="Takami S."/>
            <person name="Terashima Y."/>
            <person name="Suzuki O."/>
            <person name="Nakagawa S."/>
            <person name="Senoh A."/>
            <person name="Mizoguchi H."/>
            <person name="Goto Y."/>
            <person name="Shimizu F."/>
            <person name="Wakebe H."/>
            <person name="Hishigaki H."/>
            <person name="Watanabe T."/>
            <person name="Sugiyama A."/>
            <person name="Takemoto M."/>
            <person name="Kawakami B."/>
            <person name="Yamazaki M."/>
            <person name="Watanabe K."/>
            <person name="Kumagai A."/>
            <person name="Itakura S."/>
            <person name="Fukuzumi Y."/>
            <person name="Fujimori Y."/>
            <person name="Komiyama M."/>
            <person name="Tashiro H."/>
            <person name="Tanigami A."/>
            <person name="Fujiwara T."/>
            <person name="Ono T."/>
            <person name="Yamada K."/>
            <person name="Fujii Y."/>
            <person name="Ozaki K."/>
            <person name="Hirao M."/>
            <person name="Ohmori Y."/>
            <person name="Kawabata A."/>
            <person name="Hikiji T."/>
            <person name="Kobatake N."/>
            <person name="Inagaki H."/>
            <person name="Ikema Y."/>
            <person name="Okamoto S."/>
            <person name="Okitani R."/>
            <person name="Kawakami T."/>
            <person name="Noguchi S."/>
            <person name="Itoh T."/>
            <person name="Shigeta K."/>
            <person name="Senba T."/>
            <person name="Matsumura K."/>
            <person name="Nakajima Y."/>
            <person name="Mizuno T."/>
            <person name="Morinaga M."/>
            <person name="Sasaki M."/>
            <person name="Togashi T."/>
            <person name="Oyama M."/>
            <person name="Hata H."/>
            <person name="Watanabe M."/>
            <person name="Komatsu T."/>
            <person name="Mizushima-Sugano J."/>
            <person name="Satoh T."/>
            <person name="Shirai Y."/>
            <person name="Takahashi Y."/>
            <person name="Nakagawa K."/>
            <person name="Okumura K."/>
            <person name="Nagase T."/>
            <person name="Nomura N."/>
            <person name="Kikuchi H."/>
            <person name="Masuho Y."/>
            <person name="Yamashita R."/>
            <person name="Nakai K."/>
            <person name="Yada T."/>
            <person name="Nakamura Y."/>
            <person name="Ohara O."/>
            <person name="Isogai T."/>
            <person name="Sugano S."/>
        </authorList>
    </citation>
    <scope>NUCLEOTIDE SEQUENCE [LARGE SCALE MRNA] (ISOFORMS 1 AND 3)</scope>
    <source>
        <tissue>Testis</tissue>
        <tissue>Thymus</tissue>
    </source>
</reference>
<reference key="2">
    <citation type="journal article" date="2007" name="BMC Genomics">
        <title>The full-ORF clone resource of the German cDNA consortium.</title>
        <authorList>
            <person name="Bechtel S."/>
            <person name="Rosenfelder H."/>
            <person name="Duda A."/>
            <person name="Schmidt C.P."/>
            <person name="Ernst U."/>
            <person name="Wellenreuther R."/>
            <person name="Mehrle A."/>
            <person name="Schuster C."/>
            <person name="Bahr A."/>
            <person name="Bloecker H."/>
            <person name="Heubner D."/>
            <person name="Hoerlein A."/>
            <person name="Michel G."/>
            <person name="Wedler H."/>
            <person name="Koehrer K."/>
            <person name="Ottenwaelder B."/>
            <person name="Poustka A."/>
            <person name="Wiemann S."/>
            <person name="Schupp I."/>
        </authorList>
    </citation>
    <scope>NUCLEOTIDE SEQUENCE [LARGE SCALE MRNA] (ISOFORMS 1 AND 2)</scope>
    <source>
        <tissue>Heart</tissue>
        <tissue>Testis</tissue>
    </source>
</reference>
<reference key="3">
    <citation type="journal article" date="2005" name="Nature">
        <title>Generation and annotation of the DNA sequences of human chromosomes 2 and 4.</title>
        <authorList>
            <person name="Hillier L.W."/>
            <person name="Graves T.A."/>
            <person name="Fulton R.S."/>
            <person name="Fulton L.A."/>
            <person name="Pepin K.H."/>
            <person name="Minx P."/>
            <person name="Wagner-McPherson C."/>
            <person name="Layman D."/>
            <person name="Wylie K."/>
            <person name="Sekhon M."/>
            <person name="Becker M.C."/>
            <person name="Fewell G.A."/>
            <person name="Delehaunty K.D."/>
            <person name="Miner T.L."/>
            <person name="Nash W.E."/>
            <person name="Kremitzki C."/>
            <person name="Oddy L."/>
            <person name="Du H."/>
            <person name="Sun H."/>
            <person name="Bradshaw-Cordum H."/>
            <person name="Ali J."/>
            <person name="Carter J."/>
            <person name="Cordes M."/>
            <person name="Harris A."/>
            <person name="Isak A."/>
            <person name="van Brunt A."/>
            <person name="Nguyen C."/>
            <person name="Du F."/>
            <person name="Courtney L."/>
            <person name="Kalicki J."/>
            <person name="Ozersky P."/>
            <person name="Abbott S."/>
            <person name="Armstrong J."/>
            <person name="Belter E.A."/>
            <person name="Caruso L."/>
            <person name="Cedroni M."/>
            <person name="Cotton M."/>
            <person name="Davidson T."/>
            <person name="Desai A."/>
            <person name="Elliott G."/>
            <person name="Erb T."/>
            <person name="Fronick C."/>
            <person name="Gaige T."/>
            <person name="Haakenson W."/>
            <person name="Haglund K."/>
            <person name="Holmes A."/>
            <person name="Harkins R."/>
            <person name="Kim K."/>
            <person name="Kruchowski S.S."/>
            <person name="Strong C.M."/>
            <person name="Grewal N."/>
            <person name="Goyea E."/>
            <person name="Hou S."/>
            <person name="Levy A."/>
            <person name="Martinka S."/>
            <person name="Mead K."/>
            <person name="McLellan M.D."/>
            <person name="Meyer R."/>
            <person name="Randall-Maher J."/>
            <person name="Tomlinson C."/>
            <person name="Dauphin-Kohlberg S."/>
            <person name="Kozlowicz-Reilly A."/>
            <person name="Shah N."/>
            <person name="Swearengen-Shahid S."/>
            <person name="Snider J."/>
            <person name="Strong J.T."/>
            <person name="Thompson J."/>
            <person name="Yoakum M."/>
            <person name="Leonard S."/>
            <person name="Pearman C."/>
            <person name="Trani L."/>
            <person name="Radionenko M."/>
            <person name="Waligorski J.E."/>
            <person name="Wang C."/>
            <person name="Rock S.M."/>
            <person name="Tin-Wollam A.-M."/>
            <person name="Maupin R."/>
            <person name="Latreille P."/>
            <person name="Wendl M.C."/>
            <person name="Yang S.-P."/>
            <person name="Pohl C."/>
            <person name="Wallis J.W."/>
            <person name="Spieth J."/>
            <person name="Bieri T.A."/>
            <person name="Berkowicz N."/>
            <person name="Nelson J.O."/>
            <person name="Osborne J."/>
            <person name="Ding L."/>
            <person name="Meyer R."/>
            <person name="Sabo A."/>
            <person name="Shotland Y."/>
            <person name="Sinha P."/>
            <person name="Wohldmann P.E."/>
            <person name="Cook L.L."/>
            <person name="Hickenbotham M.T."/>
            <person name="Eldred J."/>
            <person name="Williams D."/>
            <person name="Jones T.A."/>
            <person name="She X."/>
            <person name="Ciccarelli F.D."/>
            <person name="Izaurralde E."/>
            <person name="Taylor J."/>
            <person name="Schmutz J."/>
            <person name="Myers R.M."/>
            <person name="Cox D.R."/>
            <person name="Huang X."/>
            <person name="McPherson J.D."/>
            <person name="Mardis E.R."/>
            <person name="Clifton S.W."/>
            <person name="Warren W.C."/>
            <person name="Chinwalla A.T."/>
            <person name="Eddy S.R."/>
            <person name="Marra M.A."/>
            <person name="Ovcharenko I."/>
            <person name="Furey T.S."/>
            <person name="Miller W."/>
            <person name="Eichler E.E."/>
            <person name="Bork P."/>
            <person name="Suyama M."/>
            <person name="Torrents D."/>
            <person name="Waterston R.H."/>
            <person name="Wilson R.K."/>
        </authorList>
    </citation>
    <scope>NUCLEOTIDE SEQUENCE [LARGE SCALE GENOMIC DNA]</scope>
</reference>
<reference key="4">
    <citation type="submission" date="2005-07" db="EMBL/GenBank/DDBJ databases">
        <authorList>
            <person name="Mural R.J."/>
            <person name="Istrail S."/>
            <person name="Sutton G."/>
            <person name="Florea L."/>
            <person name="Halpern A.L."/>
            <person name="Mobarry C.M."/>
            <person name="Lippert R."/>
            <person name="Walenz B."/>
            <person name="Shatkay H."/>
            <person name="Dew I."/>
            <person name="Miller J.R."/>
            <person name="Flanigan M.J."/>
            <person name="Edwards N.J."/>
            <person name="Bolanos R."/>
            <person name="Fasulo D."/>
            <person name="Halldorsson B.V."/>
            <person name="Hannenhalli S."/>
            <person name="Turner R."/>
            <person name="Yooseph S."/>
            <person name="Lu F."/>
            <person name="Nusskern D.R."/>
            <person name="Shue B.C."/>
            <person name="Zheng X.H."/>
            <person name="Zhong F."/>
            <person name="Delcher A.L."/>
            <person name="Huson D.H."/>
            <person name="Kravitz S.A."/>
            <person name="Mouchard L."/>
            <person name="Reinert K."/>
            <person name="Remington K.A."/>
            <person name="Clark A.G."/>
            <person name="Waterman M.S."/>
            <person name="Eichler E.E."/>
            <person name="Adams M.D."/>
            <person name="Hunkapiller M.W."/>
            <person name="Myers E.W."/>
            <person name="Venter J.C."/>
        </authorList>
    </citation>
    <scope>NUCLEOTIDE SEQUENCE [LARGE SCALE GENOMIC DNA]</scope>
</reference>
<reference key="5">
    <citation type="journal article" date="2004" name="Genome Res.">
        <title>The status, quality, and expansion of the NIH full-length cDNA project: the Mammalian Gene Collection (MGC).</title>
        <authorList>
            <consortium name="The MGC Project Team"/>
        </authorList>
    </citation>
    <scope>NUCLEOTIDE SEQUENCE [LARGE SCALE MRNA] (ISOFORM 1)</scope>
    <source>
        <tissue>Cervix</tissue>
    </source>
</reference>
<feature type="chain" id="PRO_0000068647" description="THAP domain-containing protein 6">
    <location>
        <begin position="1"/>
        <end position="222"/>
    </location>
</feature>
<feature type="zinc finger region" description="THAP-type" evidence="3">
    <location>
        <begin position="1"/>
        <end position="89"/>
    </location>
</feature>
<feature type="coiled-coil region" evidence="2">
    <location>
        <begin position="149"/>
        <end position="194"/>
    </location>
</feature>
<feature type="short sequence motif" description="HCFC1-binding motif (HBM)" evidence="1">
    <location>
        <begin position="139"/>
        <end position="142"/>
    </location>
</feature>
<feature type="splice variant" id="VSP_039072" description="In isoform 2." evidence="5">
    <location>
        <begin position="97"/>
        <end position="138"/>
    </location>
</feature>
<feature type="splice variant" id="VSP_054378" description="In isoform 3." evidence="4">
    <original>EHSYSVMDSPKKLKHKLDHVIGELEDTKESLRNVLDREKRFQKSLRKTIRELKDECLISQETANRLDTFCWDCCQESIEQDY</original>
    <variation>KHRKRKQEQEEEQKPRREKC</variation>
    <location>
        <begin position="139"/>
        <end position="220"/>
    </location>
</feature>
<accession>Q8TBB0</accession>
<accession>B4E146</accession>
<accession>Q5HYJ7</accession>
<accession>Q5JPC6</accession>
<proteinExistence type="evidence at protein level"/>
<dbReference type="EMBL" id="AK303658">
    <property type="protein sequence ID" value="BAG64658.1"/>
    <property type="molecule type" value="mRNA"/>
</dbReference>
<dbReference type="EMBL" id="AK313765">
    <property type="protein sequence ID" value="BAG36503.1"/>
    <property type="molecule type" value="mRNA"/>
</dbReference>
<dbReference type="EMBL" id="AL833350">
    <property type="protein sequence ID" value="CAI46111.1"/>
    <property type="molecule type" value="mRNA"/>
</dbReference>
<dbReference type="EMBL" id="BX647579">
    <property type="protein sequence ID" value="CAI46093.1"/>
    <property type="molecule type" value="mRNA"/>
</dbReference>
<dbReference type="EMBL" id="AC096759">
    <property type="status" value="NOT_ANNOTATED_CDS"/>
    <property type="molecule type" value="Genomic_DNA"/>
</dbReference>
<dbReference type="EMBL" id="CH471057">
    <property type="protein sequence ID" value="EAX05731.1"/>
    <property type="molecule type" value="Genomic_DNA"/>
</dbReference>
<dbReference type="EMBL" id="BC022989">
    <property type="protein sequence ID" value="AAH22989.1"/>
    <property type="molecule type" value="mRNA"/>
</dbReference>
<dbReference type="CCDS" id="CCDS3568.1">
    <molecule id="Q8TBB0-1"/>
</dbReference>
<dbReference type="CCDS" id="CCDS82932.1">
    <molecule id="Q8TBB0-2"/>
</dbReference>
<dbReference type="RefSeq" id="NP_001304720.1">
    <molecule id="Q8TBB0-2"/>
    <property type="nucleotide sequence ID" value="NM_001317791.2"/>
</dbReference>
<dbReference type="RefSeq" id="NP_653322.1">
    <molecule id="Q8TBB0-1"/>
    <property type="nucleotide sequence ID" value="NM_144721.6"/>
</dbReference>
<dbReference type="RefSeq" id="XP_005262831.1">
    <molecule id="Q8TBB0-3"/>
    <property type="nucleotide sequence ID" value="XM_005262774.5"/>
</dbReference>
<dbReference type="RefSeq" id="XP_011529968.1">
    <molecule id="Q8TBB0-1"/>
    <property type="nucleotide sequence ID" value="XM_011531666.3"/>
</dbReference>
<dbReference type="RefSeq" id="XP_011529969.1">
    <molecule id="Q8TBB0-1"/>
    <property type="nucleotide sequence ID" value="XM_011531667.4"/>
</dbReference>
<dbReference type="RefSeq" id="XP_016863289.1">
    <molecule id="Q8TBB0-2"/>
    <property type="nucleotide sequence ID" value="XM_017007800.2"/>
</dbReference>
<dbReference type="RefSeq" id="XP_054204990.1">
    <molecule id="Q8TBB0-1"/>
    <property type="nucleotide sequence ID" value="XM_054349015.1"/>
</dbReference>
<dbReference type="RefSeq" id="XP_054204991.1">
    <molecule id="Q8TBB0-1"/>
    <property type="nucleotide sequence ID" value="XM_054349016.1"/>
</dbReference>
<dbReference type="RefSeq" id="XP_054204993.1">
    <molecule id="Q8TBB0-2"/>
    <property type="nucleotide sequence ID" value="XM_054349018.1"/>
</dbReference>
<dbReference type="RefSeq" id="XP_054204996.1">
    <molecule id="Q8TBB0-3"/>
    <property type="nucleotide sequence ID" value="XM_054349021.1"/>
</dbReference>
<dbReference type="SMR" id="Q8TBB0"/>
<dbReference type="BioGRID" id="127466">
    <property type="interactions" value="20"/>
</dbReference>
<dbReference type="ELM" id="Q8TBB0"/>
<dbReference type="FunCoup" id="Q8TBB0">
    <property type="interactions" value="286"/>
</dbReference>
<dbReference type="IntAct" id="Q8TBB0">
    <property type="interactions" value="20"/>
</dbReference>
<dbReference type="STRING" id="9606.ENSP00000309007"/>
<dbReference type="iPTMnet" id="Q8TBB0"/>
<dbReference type="PhosphoSitePlus" id="Q8TBB0"/>
<dbReference type="BioMuta" id="THAP6"/>
<dbReference type="DMDM" id="29839572"/>
<dbReference type="jPOST" id="Q8TBB0"/>
<dbReference type="MassIVE" id="Q8TBB0"/>
<dbReference type="PaxDb" id="9606-ENSP00000309007"/>
<dbReference type="PeptideAtlas" id="Q8TBB0"/>
<dbReference type="ProteomicsDB" id="5725"/>
<dbReference type="ProteomicsDB" id="73980">
    <molecule id="Q8TBB0-1"/>
</dbReference>
<dbReference type="ProteomicsDB" id="73981">
    <molecule id="Q8TBB0-2"/>
</dbReference>
<dbReference type="Antibodypedia" id="24670">
    <property type="antibodies" value="249 antibodies from 14 providers"/>
</dbReference>
<dbReference type="DNASU" id="152815"/>
<dbReference type="Ensembl" id="ENST00000311638.7">
    <molecule id="Q8TBB0-1"/>
    <property type="protein sequence ID" value="ENSP00000309007.3"/>
    <property type="gene ID" value="ENSG00000174796.12"/>
</dbReference>
<dbReference type="Ensembl" id="ENST00000380837.7">
    <molecule id="Q8TBB0-2"/>
    <property type="protein sequence ID" value="ENSP00000370217.3"/>
    <property type="gene ID" value="ENSG00000174796.12"/>
</dbReference>
<dbReference type="Ensembl" id="ENST00000507556.5">
    <molecule id="Q8TBB0-3"/>
    <property type="protein sequence ID" value="ENSP00000427651.1"/>
    <property type="gene ID" value="ENSG00000174796.12"/>
</dbReference>
<dbReference type="Ensembl" id="ENST00000514480.1">
    <molecule id="Q8TBB0-1"/>
    <property type="protein sequence ID" value="ENSP00000423720.1"/>
    <property type="gene ID" value="ENSG00000174796.12"/>
</dbReference>
<dbReference type="GeneID" id="152815"/>
<dbReference type="KEGG" id="hsa:152815"/>
<dbReference type="MANE-Select" id="ENST00000311638.7">
    <property type="protein sequence ID" value="ENSP00000309007.3"/>
    <property type="RefSeq nucleotide sequence ID" value="NM_144721.6"/>
    <property type="RefSeq protein sequence ID" value="NP_653322.1"/>
</dbReference>
<dbReference type="UCSC" id="uc003him.4">
    <molecule id="Q8TBB0-1"/>
    <property type="organism name" value="human"/>
</dbReference>
<dbReference type="AGR" id="HGNC:23189"/>
<dbReference type="CTD" id="152815"/>
<dbReference type="DisGeNET" id="152815"/>
<dbReference type="GeneCards" id="THAP6"/>
<dbReference type="HGNC" id="HGNC:23189">
    <property type="gene designation" value="THAP6"/>
</dbReference>
<dbReference type="HPA" id="ENSG00000174796">
    <property type="expression patterns" value="Low tissue specificity"/>
</dbReference>
<dbReference type="MIM" id="612535">
    <property type="type" value="gene"/>
</dbReference>
<dbReference type="neXtProt" id="NX_Q8TBB0"/>
<dbReference type="OpenTargets" id="ENSG00000174796"/>
<dbReference type="PharmGKB" id="PA134873449"/>
<dbReference type="VEuPathDB" id="HostDB:ENSG00000174796"/>
<dbReference type="eggNOG" id="ENOG502S349">
    <property type="taxonomic scope" value="Eukaryota"/>
</dbReference>
<dbReference type="GeneTree" id="ENSGT00940000162692"/>
<dbReference type="HOGENOM" id="CLU_076186_3_0_1"/>
<dbReference type="InParanoid" id="Q8TBB0"/>
<dbReference type="OMA" id="AFCWEYC"/>
<dbReference type="OrthoDB" id="7312725at2759"/>
<dbReference type="PAN-GO" id="Q8TBB0">
    <property type="GO annotations" value="0 GO annotations based on evolutionary models"/>
</dbReference>
<dbReference type="PhylomeDB" id="Q8TBB0"/>
<dbReference type="TreeFam" id="TF335838"/>
<dbReference type="PathwayCommons" id="Q8TBB0"/>
<dbReference type="SignaLink" id="Q8TBB0"/>
<dbReference type="BioGRID-ORCS" id="152815">
    <property type="hits" value="15 hits in 1177 CRISPR screens"/>
</dbReference>
<dbReference type="ChiTaRS" id="THAP6">
    <property type="organism name" value="human"/>
</dbReference>
<dbReference type="GeneWiki" id="THAP6"/>
<dbReference type="GenomeRNAi" id="152815"/>
<dbReference type="Pharos" id="Q8TBB0">
    <property type="development level" value="Tdark"/>
</dbReference>
<dbReference type="PRO" id="PR:Q8TBB0"/>
<dbReference type="Proteomes" id="UP000005640">
    <property type="component" value="Chromosome 4"/>
</dbReference>
<dbReference type="RNAct" id="Q8TBB0">
    <property type="molecule type" value="protein"/>
</dbReference>
<dbReference type="Bgee" id="ENSG00000174796">
    <property type="expression patterns" value="Expressed in calcaneal tendon and 175 other cell types or tissues"/>
</dbReference>
<dbReference type="ExpressionAtlas" id="Q8TBB0">
    <property type="expression patterns" value="baseline and differential"/>
</dbReference>
<dbReference type="GO" id="GO:0015630">
    <property type="term" value="C:microtubule cytoskeleton"/>
    <property type="evidence" value="ECO:0000314"/>
    <property type="project" value="LIFEdb"/>
</dbReference>
<dbReference type="GO" id="GO:0003677">
    <property type="term" value="F:DNA binding"/>
    <property type="evidence" value="ECO:0007669"/>
    <property type="project" value="UniProtKB-KW"/>
</dbReference>
<dbReference type="GO" id="GO:0008270">
    <property type="term" value="F:zinc ion binding"/>
    <property type="evidence" value="ECO:0007669"/>
    <property type="project" value="UniProtKB-KW"/>
</dbReference>
<dbReference type="Gene3D" id="6.20.210.20">
    <property type="entry name" value="THAP domain"/>
    <property type="match status" value="1"/>
</dbReference>
<dbReference type="InterPro" id="IPR006612">
    <property type="entry name" value="THAP_Znf"/>
</dbReference>
<dbReference type="InterPro" id="IPR038441">
    <property type="entry name" value="THAP_Znf_sf"/>
</dbReference>
<dbReference type="PANTHER" id="PTHR47577">
    <property type="entry name" value="THAP DOMAIN-CONTAINING PROTEIN 6"/>
    <property type="match status" value="1"/>
</dbReference>
<dbReference type="PANTHER" id="PTHR47577:SF1">
    <property type="entry name" value="THAP DOMAIN-CONTAINING PROTEIN 6"/>
    <property type="match status" value="1"/>
</dbReference>
<dbReference type="Pfam" id="PF05485">
    <property type="entry name" value="THAP"/>
    <property type="match status" value="1"/>
</dbReference>
<dbReference type="SMART" id="SM00692">
    <property type="entry name" value="DM3"/>
    <property type="match status" value="1"/>
</dbReference>
<dbReference type="SMART" id="SM00980">
    <property type="entry name" value="THAP"/>
    <property type="match status" value="1"/>
</dbReference>
<dbReference type="SUPFAM" id="SSF57716">
    <property type="entry name" value="Glucocorticoid receptor-like (DNA-binding domain)"/>
    <property type="match status" value="1"/>
</dbReference>
<dbReference type="PROSITE" id="PS50950">
    <property type="entry name" value="ZF_THAP"/>
    <property type="match status" value="1"/>
</dbReference>
<name>THAP6_HUMAN</name>
<organism>
    <name type="scientific">Homo sapiens</name>
    <name type="common">Human</name>
    <dbReference type="NCBI Taxonomy" id="9606"/>
    <lineage>
        <taxon>Eukaryota</taxon>
        <taxon>Metazoa</taxon>
        <taxon>Chordata</taxon>
        <taxon>Craniata</taxon>
        <taxon>Vertebrata</taxon>
        <taxon>Euteleostomi</taxon>
        <taxon>Mammalia</taxon>
        <taxon>Eutheria</taxon>
        <taxon>Euarchontoglires</taxon>
        <taxon>Primates</taxon>
        <taxon>Haplorrhini</taxon>
        <taxon>Catarrhini</taxon>
        <taxon>Hominidae</taxon>
        <taxon>Homo</taxon>
    </lineage>
</organism>